<gene>
    <name evidence="1" type="primary">hemA</name>
    <name type="ordered locus">Shewmr7_0796</name>
</gene>
<reference key="1">
    <citation type="submission" date="2006-08" db="EMBL/GenBank/DDBJ databases">
        <title>Complete sequence of chromosome 1 of Shewanella sp. MR-7.</title>
        <authorList>
            <person name="Copeland A."/>
            <person name="Lucas S."/>
            <person name="Lapidus A."/>
            <person name="Barry K."/>
            <person name="Detter J.C."/>
            <person name="Glavina del Rio T."/>
            <person name="Hammon N."/>
            <person name="Israni S."/>
            <person name="Dalin E."/>
            <person name="Tice H."/>
            <person name="Pitluck S."/>
            <person name="Kiss H."/>
            <person name="Brettin T."/>
            <person name="Bruce D."/>
            <person name="Han C."/>
            <person name="Tapia R."/>
            <person name="Gilna P."/>
            <person name="Schmutz J."/>
            <person name="Larimer F."/>
            <person name="Land M."/>
            <person name="Hauser L."/>
            <person name="Kyrpides N."/>
            <person name="Mikhailova N."/>
            <person name="Nealson K."/>
            <person name="Konstantinidis K."/>
            <person name="Klappenbach J."/>
            <person name="Tiedje J."/>
            <person name="Richardson P."/>
        </authorList>
    </citation>
    <scope>NUCLEOTIDE SEQUENCE [LARGE SCALE GENOMIC DNA]</scope>
    <source>
        <strain>MR-7</strain>
    </source>
</reference>
<name>HEM1_SHESR</name>
<accession>Q0HYK9</accession>
<organism>
    <name type="scientific">Shewanella sp. (strain MR-7)</name>
    <dbReference type="NCBI Taxonomy" id="60481"/>
    <lineage>
        <taxon>Bacteria</taxon>
        <taxon>Pseudomonadati</taxon>
        <taxon>Pseudomonadota</taxon>
        <taxon>Gammaproteobacteria</taxon>
        <taxon>Alteromonadales</taxon>
        <taxon>Shewanellaceae</taxon>
        <taxon>Shewanella</taxon>
    </lineage>
</organism>
<keyword id="KW-0521">NADP</keyword>
<keyword id="KW-0560">Oxidoreductase</keyword>
<keyword id="KW-0627">Porphyrin biosynthesis</keyword>
<dbReference type="EC" id="1.2.1.70" evidence="1"/>
<dbReference type="EMBL" id="CP000444">
    <property type="protein sequence ID" value="ABI41796.1"/>
    <property type="molecule type" value="Genomic_DNA"/>
</dbReference>
<dbReference type="SMR" id="Q0HYK9"/>
<dbReference type="KEGG" id="shm:Shewmr7_0796"/>
<dbReference type="HOGENOM" id="CLU_035113_2_2_6"/>
<dbReference type="UniPathway" id="UPA00251">
    <property type="reaction ID" value="UER00316"/>
</dbReference>
<dbReference type="GO" id="GO:0008883">
    <property type="term" value="F:glutamyl-tRNA reductase activity"/>
    <property type="evidence" value="ECO:0007669"/>
    <property type="project" value="UniProtKB-UniRule"/>
</dbReference>
<dbReference type="GO" id="GO:0050661">
    <property type="term" value="F:NADP binding"/>
    <property type="evidence" value="ECO:0007669"/>
    <property type="project" value="InterPro"/>
</dbReference>
<dbReference type="GO" id="GO:0019353">
    <property type="term" value="P:protoporphyrinogen IX biosynthetic process from glutamate"/>
    <property type="evidence" value="ECO:0007669"/>
    <property type="project" value="TreeGrafter"/>
</dbReference>
<dbReference type="CDD" id="cd05213">
    <property type="entry name" value="NAD_bind_Glutamyl_tRNA_reduct"/>
    <property type="match status" value="1"/>
</dbReference>
<dbReference type="FunFam" id="3.30.460.30:FF:000001">
    <property type="entry name" value="Glutamyl-tRNA reductase"/>
    <property type="match status" value="1"/>
</dbReference>
<dbReference type="FunFam" id="3.40.50.720:FF:000031">
    <property type="entry name" value="Glutamyl-tRNA reductase"/>
    <property type="match status" value="1"/>
</dbReference>
<dbReference type="Gene3D" id="3.30.460.30">
    <property type="entry name" value="Glutamyl-tRNA reductase, N-terminal domain"/>
    <property type="match status" value="1"/>
</dbReference>
<dbReference type="Gene3D" id="3.40.50.720">
    <property type="entry name" value="NAD(P)-binding Rossmann-like Domain"/>
    <property type="match status" value="1"/>
</dbReference>
<dbReference type="HAMAP" id="MF_00087">
    <property type="entry name" value="Glu_tRNA_reductase"/>
    <property type="match status" value="1"/>
</dbReference>
<dbReference type="InterPro" id="IPR000343">
    <property type="entry name" value="4pyrrol_synth_GluRdtase"/>
</dbReference>
<dbReference type="InterPro" id="IPR015896">
    <property type="entry name" value="4pyrrol_synth_GluRdtase_dimer"/>
</dbReference>
<dbReference type="InterPro" id="IPR015895">
    <property type="entry name" value="4pyrrol_synth_GluRdtase_N"/>
</dbReference>
<dbReference type="InterPro" id="IPR018214">
    <property type="entry name" value="GluRdtase_CS"/>
</dbReference>
<dbReference type="InterPro" id="IPR036453">
    <property type="entry name" value="GluRdtase_dimer_dom_sf"/>
</dbReference>
<dbReference type="InterPro" id="IPR036343">
    <property type="entry name" value="GluRdtase_N_sf"/>
</dbReference>
<dbReference type="InterPro" id="IPR036291">
    <property type="entry name" value="NAD(P)-bd_dom_sf"/>
</dbReference>
<dbReference type="InterPro" id="IPR006151">
    <property type="entry name" value="Shikm_DH/Glu-tRNA_Rdtase"/>
</dbReference>
<dbReference type="NCBIfam" id="TIGR01035">
    <property type="entry name" value="hemA"/>
    <property type="match status" value="1"/>
</dbReference>
<dbReference type="PANTHER" id="PTHR43013">
    <property type="entry name" value="GLUTAMYL-TRNA REDUCTASE"/>
    <property type="match status" value="1"/>
</dbReference>
<dbReference type="PANTHER" id="PTHR43013:SF1">
    <property type="entry name" value="GLUTAMYL-TRNA REDUCTASE"/>
    <property type="match status" value="1"/>
</dbReference>
<dbReference type="Pfam" id="PF00745">
    <property type="entry name" value="GlutR_dimer"/>
    <property type="match status" value="1"/>
</dbReference>
<dbReference type="Pfam" id="PF05201">
    <property type="entry name" value="GlutR_N"/>
    <property type="match status" value="1"/>
</dbReference>
<dbReference type="Pfam" id="PF01488">
    <property type="entry name" value="Shikimate_DH"/>
    <property type="match status" value="1"/>
</dbReference>
<dbReference type="PIRSF" id="PIRSF000445">
    <property type="entry name" value="4pyrrol_synth_GluRdtase"/>
    <property type="match status" value="1"/>
</dbReference>
<dbReference type="SUPFAM" id="SSF69742">
    <property type="entry name" value="Glutamyl tRNA-reductase catalytic, N-terminal domain"/>
    <property type="match status" value="1"/>
</dbReference>
<dbReference type="SUPFAM" id="SSF69075">
    <property type="entry name" value="Glutamyl tRNA-reductase dimerization domain"/>
    <property type="match status" value="1"/>
</dbReference>
<dbReference type="SUPFAM" id="SSF51735">
    <property type="entry name" value="NAD(P)-binding Rossmann-fold domains"/>
    <property type="match status" value="1"/>
</dbReference>
<dbReference type="PROSITE" id="PS00747">
    <property type="entry name" value="GLUTR"/>
    <property type="match status" value="1"/>
</dbReference>
<feature type="chain" id="PRO_1000004694" description="Glutamyl-tRNA reductase">
    <location>
        <begin position="1"/>
        <end position="416"/>
    </location>
</feature>
<feature type="active site" description="Nucleophile" evidence="1">
    <location>
        <position position="50"/>
    </location>
</feature>
<feature type="binding site" evidence="1">
    <location>
        <begin position="49"/>
        <end position="52"/>
    </location>
    <ligand>
        <name>substrate</name>
    </ligand>
</feature>
<feature type="binding site" evidence="1">
    <location>
        <position position="105"/>
    </location>
    <ligand>
        <name>substrate</name>
    </ligand>
</feature>
<feature type="binding site" evidence="1">
    <location>
        <begin position="110"/>
        <end position="112"/>
    </location>
    <ligand>
        <name>substrate</name>
    </ligand>
</feature>
<feature type="binding site" evidence="1">
    <location>
        <position position="116"/>
    </location>
    <ligand>
        <name>substrate</name>
    </ligand>
</feature>
<feature type="binding site" evidence="1">
    <location>
        <begin position="185"/>
        <end position="190"/>
    </location>
    <ligand>
        <name>NADP(+)</name>
        <dbReference type="ChEBI" id="CHEBI:58349"/>
    </ligand>
</feature>
<feature type="site" description="Important for activity" evidence="1">
    <location>
        <position position="95"/>
    </location>
</feature>
<sequence length="416" mass="45582">MSLVAIGINHKTATVDLREKVAFSPDKIHDAMKSLASRTRSGEAVIVSTCNRTELYCNNGDEADIIEWLEEYHGLDHQDVAPCLYNYHGQAAVKHLMRVASGLDSLILGEPQILGQVKQAFVKAKEAGTVALTIDRLFQNTFSVAKKVRTETEIGAAAVSVAFAAVSMAKHIFSSLSTTKVLLIGAGETIELVAKHLKDNGVASMVVANRTLERAQSMCEEFNATAITLAQIPDFLPKADIVISSTASPLPILGKGMVEKALKQRRHQPMLLVDIAVPRDIEPEVADLDDAFLYTVDDLHSIIEQNKASRKEAAEQAELITEEQSYLFMDWVRSLESVDSIREYRSQSMAIKDELVERALNKLAQGGDTEQVLIELANRLTNRLIHAPTQALTVASRQGDLNTLGQLRTALGLDKN</sequence>
<proteinExistence type="inferred from homology"/>
<protein>
    <recommendedName>
        <fullName evidence="1">Glutamyl-tRNA reductase</fullName>
        <shortName evidence="1">GluTR</shortName>
        <ecNumber evidence="1">1.2.1.70</ecNumber>
    </recommendedName>
</protein>
<comment type="function">
    <text evidence="1">Catalyzes the NADPH-dependent reduction of glutamyl-tRNA(Glu) to glutamate 1-semialdehyde (GSA).</text>
</comment>
<comment type="catalytic activity">
    <reaction evidence="1">
        <text>(S)-4-amino-5-oxopentanoate + tRNA(Glu) + NADP(+) = L-glutamyl-tRNA(Glu) + NADPH + H(+)</text>
        <dbReference type="Rhea" id="RHEA:12344"/>
        <dbReference type="Rhea" id="RHEA-COMP:9663"/>
        <dbReference type="Rhea" id="RHEA-COMP:9680"/>
        <dbReference type="ChEBI" id="CHEBI:15378"/>
        <dbReference type="ChEBI" id="CHEBI:57501"/>
        <dbReference type="ChEBI" id="CHEBI:57783"/>
        <dbReference type="ChEBI" id="CHEBI:58349"/>
        <dbReference type="ChEBI" id="CHEBI:78442"/>
        <dbReference type="ChEBI" id="CHEBI:78520"/>
        <dbReference type="EC" id="1.2.1.70"/>
    </reaction>
</comment>
<comment type="pathway">
    <text evidence="1">Porphyrin-containing compound metabolism; protoporphyrin-IX biosynthesis; 5-aminolevulinate from L-glutamyl-tRNA(Glu): step 1/2.</text>
</comment>
<comment type="subunit">
    <text evidence="1">Homodimer.</text>
</comment>
<comment type="domain">
    <text evidence="1">Possesses an unusual extended V-shaped dimeric structure with each monomer consisting of three distinct domains arranged along a curved 'spinal' alpha-helix. The N-terminal catalytic domain specifically recognizes the glutamate moiety of the substrate. The second domain is the NADPH-binding domain, and the third C-terminal domain is responsible for dimerization.</text>
</comment>
<comment type="miscellaneous">
    <text evidence="1">During catalysis, the active site Cys acts as a nucleophile attacking the alpha-carbonyl group of tRNA-bound glutamate with the formation of a thioester intermediate between enzyme and glutamate, and the concomitant release of tRNA(Glu). The thioester intermediate is finally reduced by direct hydride transfer from NADPH, to form the product GSA.</text>
</comment>
<comment type="similarity">
    <text evidence="1">Belongs to the glutamyl-tRNA reductase family.</text>
</comment>
<evidence type="ECO:0000255" key="1">
    <source>
        <dbReference type="HAMAP-Rule" id="MF_00087"/>
    </source>
</evidence>